<proteinExistence type="predicted"/>
<gene>
    <name type="ORF">ORF7</name>
</gene>
<accession>C1JJY6</accession>
<evidence type="ECO:0000256" key="1">
    <source>
        <dbReference type="SAM" id="MobiDB-lite"/>
    </source>
</evidence>
<organismHost>
    <name type="scientific">Halorubrum sp. PV6</name>
    <dbReference type="NCBI Taxonomy" id="634157"/>
</organismHost>
<reference key="1">
    <citation type="journal article" date="2009" name="Mol. Microbiol.">
        <title>An ssDNA virus infecting archaea: a new lineage of viruses with a membrane envelope.</title>
        <authorList>
            <person name="Pietila M.K."/>
            <person name="Roine E."/>
            <person name="Paulin L."/>
            <person name="Kalkkinen N."/>
            <person name="Bamford D.H."/>
        </authorList>
    </citation>
    <scope>NUCLEOTIDE SEQUENCE [GENOMIC DNA]</scope>
</reference>
<protein>
    <recommendedName>
        <fullName>Uncharacterized protein 7</fullName>
    </recommendedName>
</protein>
<sequence>MTQLEGPENPDRIGALILFARRWSLEIIGLLLIGIAGMLFLELQPTIPRFWQVSFLAAVFASPIAYYTGSTVVRWLYDPKWLYLIDLSAAEEKGSLYRLPESQFRDLEVLDGQLDRLAPGLYVGKRVDLENNRVAGTWRGTLSDRDLLLSLRKVRECRGQLEEDARQGFILRSSAYTVVRRAVRDTTMQVVKTFERGSLPDSGEAMNNAIHSELEEFGITDNLEETIEDLAEEKLADSDLEADSDDSESFEFVENPEPSENGSEPTIKND</sequence>
<organism>
    <name type="scientific">Halorubrum pleomorphic virus 1</name>
    <name type="common">HRPV-1</name>
    <dbReference type="NCBI Taxonomy" id="634168"/>
    <lineage>
        <taxon>Viruses</taxon>
        <taxon>Monodnaviria</taxon>
        <taxon>Trapavirae</taxon>
        <taxon>Saleviricota</taxon>
        <taxon>Huolimaviricetes</taxon>
        <taxon>Haloruvirales</taxon>
        <taxon>Pleolipoviridae</taxon>
        <taxon>Alphapleolipovirus</taxon>
        <taxon>Alphapleolipovirus finnoniense</taxon>
    </lineage>
</organism>
<name>ORF7_HAPV1</name>
<feature type="chain" id="PRO_0000420966" description="Uncharacterized protein 7">
    <location>
        <begin position="1"/>
        <end position="270"/>
    </location>
</feature>
<feature type="region of interest" description="Disordered" evidence="1">
    <location>
        <begin position="235"/>
        <end position="270"/>
    </location>
</feature>
<feature type="compositionally biased region" description="Acidic residues" evidence="1">
    <location>
        <begin position="238"/>
        <end position="251"/>
    </location>
</feature>
<feature type="compositionally biased region" description="Low complexity" evidence="1">
    <location>
        <begin position="255"/>
        <end position="270"/>
    </location>
</feature>
<dbReference type="EMBL" id="FJ685651">
    <property type="protein sequence ID" value="ACO54902.1"/>
    <property type="molecule type" value="Genomic_DNA"/>
</dbReference>
<dbReference type="RefSeq" id="YP_002791892.1">
    <property type="nucleotide sequence ID" value="NC_012558.1"/>
</dbReference>
<dbReference type="SMR" id="C1JJY6"/>
<dbReference type="KEGG" id="vg:7755267"/>
<dbReference type="OrthoDB" id="23391at10239"/>
<dbReference type="Proteomes" id="UP000009401">
    <property type="component" value="Genome"/>
</dbReference>
<keyword id="KW-1185">Reference proteome</keyword>